<accession>Q2Y6L9</accession>
<feature type="signal peptide" evidence="1">
    <location>
        <begin position="1"/>
        <end position="29"/>
    </location>
</feature>
<feature type="chain" id="PRO_0000353951" description="Membrane-bound lytic murein transglycosylase F">
    <location>
        <begin position="30"/>
        <end position="478"/>
    </location>
</feature>
<feature type="region of interest" description="Non-LT domain" evidence="1">
    <location>
        <begin position="30"/>
        <end position="269"/>
    </location>
</feature>
<feature type="region of interest" description="LT domain" evidence="1">
    <location>
        <begin position="271"/>
        <end position="478"/>
    </location>
</feature>
<feature type="active site" evidence="1">
    <location>
        <position position="316"/>
    </location>
</feature>
<protein>
    <recommendedName>
        <fullName evidence="1">Membrane-bound lytic murein transglycosylase F</fullName>
        <ecNumber evidence="1">4.2.2.n1</ecNumber>
    </recommendedName>
    <alternativeName>
        <fullName evidence="1">Murein lyase F</fullName>
    </alternativeName>
</protein>
<organism>
    <name type="scientific">Nitrosospira multiformis (strain ATCC 25196 / NCIMB 11849 / C 71)</name>
    <dbReference type="NCBI Taxonomy" id="323848"/>
    <lineage>
        <taxon>Bacteria</taxon>
        <taxon>Pseudomonadati</taxon>
        <taxon>Pseudomonadota</taxon>
        <taxon>Betaproteobacteria</taxon>
        <taxon>Nitrosomonadales</taxon>
        <taxon>Nitrosomonadaceae</taxon>
        <taxon>Nitrosospira</taxon>
    </lineage>
</organism>
<name>MLTF_NITMU</name>
<proteinExistence type="inferred from homology"/>
<gene>
    <name evidence="1" type="primary">mltF</name>
    <name type="ordered locus">Nmul_A2311</name>
</gene>
<reference key="1">
    <citation type="submission" date="2005-08" db="EMBL/GenBank/DDBJ databases">
        <title>Complete sequence of chromosome 1 of Nitrosospira multiformis ATCC 25196.</title>
        <authorList>
            <person name="Copeland A."/>
            <person name="Lucas S."/>
            <person name="Lapidus A."/>
            <person name="Barry K."/>
            <person name="Detter J.C."/>
            <person name="Glavina T."/>
            <person name="Hammon N."/>
            <person name="Israni S."/>
            <person name="Pitluck S."/>
            <person name="Chain P."/>
            <person name="Malfatti S."/>
            <person name="Shin M."/>
            <person name="Vergez L."/>
            <person name="Schmutz J."/>
            <person name="Larimer F."/>
            <person name="Land M."/>
            <person name="Hauser L."/>
            <person name="Kyrpides N."/>
            <person name="Lykidis A."/>
            <person name="Richardson P."/>
        </authorList>
    </citation>
    <scope>NUCLEOTIDE SEQUENCE [LARGE SCALE GENOMIC DNA]</scope>
    <source>
        <strain>ATCC 25196 / NCIMB 11849 / C 71</strain>
    </source>
</reference>
<sequence>MFPDSSYLFSMRSLSRFLIAIFGCGALLASCDSFERSVLPFDKTDELVVITVNSPDTYYENAEGSYAGLDYDLATEFAKELGMKVRFKTVPRLDKAWSLLEKHKGHFAAGMNISAKHSRHVAFGPIYQLVQPQLAYNTDYNKPKNLHQLGGRTIRIAKGVTHAEQLNKAKHEVPELKWKEMDLTPDELLARLAEGKVDYVVADSTQINLAKNFYPNLNAAFNLGDSVGRAWAFSPFAEQALLEATQKFFTRIQQDGTLTRLLDRYYGHIERLHHTDVNGILAKRRTILPELREHFYEAEELSGIDWRLIAALAYQESHWDALATSPSNVRGIMMLTEITADRMKVTDRLDARQSILAGARYFALLKDKLPTRIKEPDRTWMALAAYNQGPSHLEDARILAQKMGLSPDAWVDLKKTLPLLSQSEHFRTLRHGFARGGQAVVLAESVRIYYEILQKYEPPYSWGFPIVARKEDDSWQEF</sequence>
<keyword id="KW-0998">Cell outer membrane</keyword>
<keyword id="KW-0961">Cell wall biogenesis/degradation</keyword>
<keyword id="KW-0456">Lyase</keyword>
<keyword id="KW-0472">Membrane</keyword>
<keyword id="KW-1185">Reference proteome</keyword>
<keyword id="KW-0732">Signal</keyword>
<comment type="function">
    <text evidence="1">Murein-degrading enzyme that degrades murein glycan strands and insoluble, high-molecular weight murein sacculi, with the concomitant formation of a 1,6-anhydromuramoyl product. Lytic transglycosylases (LTs) play an integral role in the metabolism of the peptidoglycan (PG) sacculus. Their lytic action creates space within the PG sacculus to allow for its expansion as well as for the insertion of various structures such as secretion systems and flagella.</text>
</comment>
<comment type="catalytic activity">
    <reaction evidence="1">
        <text>Exolytic cleavage of the (1-&gt;4)-beta-glycosidic linkage between N-acetylmuramic acid (MurNAc) and N-acetylglucosamine (GlcNAc) residues in peptidoglycan, from either the reducing or the non-reducing ends of the peptidoglycan chains, with concomitant formation of a 1,6-anhydrobond in the MurNAc residue.</text>
        <dbReference type="EC" id="4.2.2.n1"/>
    </reaction>
</comment>
<comment type="subcellular location">
    <subcellularLocation>
        <location>Cell outer membrane</location>
        <topology>Peripheral membrane protein</topology>
    </subcellularLocation>
    <text evidence="1">Attached to the inner leaflet of the outer membrane.</text>
</comment>
<comment type="domain">
    <text evidence="1">The N-terminal domain does not have lytic activity and probably modulates enzymatic activity. The C-terminal domain is the catalytic active domain.</text>
</comment>
<comment type="similarity">
    <text evidence="1">In the N-terminal section; belongs to the bacterial solute-binding protein 3 family.</text>
</comment>
<comment type="similarity">
    <text evidence="1">In the C-terminal section; belongs to the transglycosylase Slt family.</text>
</comment>
<evidence type="ECO:0000255" key="1">
    <source>
        <dbReference type="HAMAP-Rule" id="MF_02016"/>
    </source>
</evidence>
<dbReference type="EC" id="4.2.2.n1" evidence="1"/>
<dbReference type="EMBL" id="CP000103">
    <property type="protein sequence ID" value="ABB75602.1"/>
    <property type="molecule type" value="Genomic_DNA"/>
</dbReference>
<dbReference type="SMR" id="Q2Y6L9"/>
<dbReference type="STRING" id="323848.Nmul_A2311"/>
<dbReference type="CAZy" id="GH23">
    <property type="family name" value="Glycoside Hydrolase Family 23"/>
</dbReference>
<dbReference type="KEGG" id="nmu:Nmul_A2311"/>
<dbReference type="eggNOG" id="COG4623">
    <property type="taxonomic scope" value="Bacteria"/>
</dbReference>
<dbReference type="HOGENOM" id="CLU_027494_0_1_4"/>
<dbReference type="OrthoDB" id="9815002at2"/>
<dbReference type="Proteomes" id="UP000002718">
    <property type="component" value="Chromosome"/>
</dbReference>
<dbReference type="GO" id="GO:0009279">
    <property type="term" value="C:cell outer membrane"/>
    <property type="evidence" value="ECO:0007669"/>
    <property type="project" value="UniProtKB-SubCell"/>
</dbReference>
<dbReference type="GO" id="GO:0008933">
    <property type="term" value="F:peptidoglycan lytic transglycosylase activity"/>
    <property type="evidence" value="ECO:0007669"/>
    <property type="project" value="UniProtKB-UniRule"/>
</dbReference>
<dbReference type="GO" id="GO:0016998">
    <property type="term" value="P:cell wall macromolecule catabolic process"/>
    <property type="evidence" value="ECO:0007669"/>
    <property type="project" value="UniProtKB-UniRule"/>
</dbReference>
<dbReference type="GO" id="GO:0071555">
    <property type="term" value="P:cell wall organization"/>
    <property type="evidence" value="ECO:0007669"/>
    <property type="project" value="UniProtKB-KW"/>
</dbReference>
<dbReference type="GO" id="GO:0009253">
    <property type="term" value="P:peptidoglycan catabolic process"/>
    <property type="evidence" value="ECO:0007669"/>
    <property type="project" value="TreeGrafter"/>
</dbReference>
<dbReference type="CDD" id="cd13403">
    <property type="entry name" value="MLTF-like"/>
    <property type="match status" value="1"/>
</dbReference>
<dbReference type="CDD" id="cd01009">
    <property type="entry name" value="PBP2_YfhD_N"/>
    <property type="match status" value="1"/>
</dbReference>
<dbReference type="Gene3D" id="1.10.530.10">
    <property type="match status" value="1"/>
</dbReference>
<dbReference type="Gene3D" id="3.40.190.10">
    <property type="entry name" value="Periplasmic binding protein-like II"/>
    <property type="match status" value="2"/>
</dbReference>
<dbReference type="HAMAP" id="MF_02016">
    <property type="entry name" value="MltF"/>
    <property type="match status" value="1"/>
</dbReference>
<dbReference type="InterPro" id="IPR023346">
    <property type="entry name" value="Lysozyme-like_dom_sf"/>
</dbReference>
<dbReference type="InterPro" id="IPR023703">
    <property type="entry name" value="MltF"/>
</dbReference>
<dbReference type="InterPro" id="IPR001638">
    <property type="entry name" value="Solute-binding_3/MltF_N"/>
</dbReference>
<dbReference type="InterPro" id="IPR000189">
    <property type="entry name" value="Transglyc_AS"/>
</dbReference>
<dbReference type="InterPro" id="IPR008258">
    <property type="entry name" value="Transglycosylase_SLT_dom_1"/>
</dbReference>
<dbReference type="NCBIfam" id="NF008112">
    <property type="entry name" value="PRK10859.1"/>
    <property type="match status" value="1"/>
</dbReference>
<dbReference type="PANTHER" id="PTHR35936">
    <property type="entry name" value="MEMBRANE-BOUND LYTIC MUREIN TRANSGLYCOSYLASE F"/>
    <property type="match status" value="1"/>
</dbReference>
<dbReference type="PANTHER" id="PTHR35936:SF32">
    <property type="entry name" value="MEMBRANE-BOUND LYTIC MUREIN TRANSGLYCOSYLASE F"/>
    <property type="match status" value="1"/>
</dbReference>
<dbReference type="Pfam" id="PF00497">
    <property type="entry name" value="SBP_bac_3"/>
    <property type="match status" value="1"/>
</dbReference>
<dbReference type="Pfam" id="PF01464">
    <property type="entry name" value="SLT"/>
    <property type="match status" value="1"/>
</dbReference>
<dbReference type="SMART" id="SM00062">
    <property type="entry name" value="PBPb"/>
    <property type="match status" value="1"/>
</dbReference>
<dbReference type="SUPFAM" id="SSF53955">
    <property type="entry name" value="Lysozyme-like"/>
    <property type="match status" value="1"/>
</dbReference>
<dbReference type="SUPFAM" id="SSF53850">
    <property type="entry name" value="Periplasmic binding protein-like II"/>
    <property type="match status" value="1"/>
</dbReference>
<dbReference type="PROSITE" id="PS00922">
    <property type="entry name" value="TRANSGLYCOSYLASE"/>
    <property type="match status" value="1"/>
</dbReference>